<comment type="function">
    <text evidence="1 2 5">Involved in 1,2-propanediol (1,2-PD) utilization within the bacterial microcompartment (BMC) dedicated to 1,2-PD degradation by catalyzing the conversion of propanoyl-CoA to propanoyl-phosphate. CoA is regenerated within the pdu BMC (for use by PduP) via this enzyme, although there must also be cofactor transport across the BMC (PubMed:26959993). Directly targeted to the BMC (By similarity). Phosphate is probably the first substrate to bind in the forward direction. CoA is probably the first substrate to bind in the reverse direction, and might bind to the enzyme as the BMC assembles, ensuring cofactor encapsulation (Probable).</text>
</comment>
<comment type="catalytic activity">
    <reaction evidence="2">
        <text>propanoyl-CoA + phosphate = propanoyl phosphate + CoA</text>
        <dbReference type="Rhea" id="RHEA:28046"/>
        <dbReference type="ChEBI" id="CHEBI:43474"/>
        <dbReference type="ChEBI" id="CHEBI:57287"/>
        <dbReference type="ChEBI" id="CHEBI:57392"/>
        <dbReference type="ChEBI" id="CHEBI:58933"/>
        <dbReference type="EC" id="2.3.1.222"/>
    </reaction>
    <physiologicalReaction direction="right-to-left" evidence="2">
        <dbReference type="Rhea" id="RHEA:28048"/>
    </physiologicalReaction>
</comment>
<comment type="cofactor">
    <cofactor evidence="2 6 7">
        <name>Zn(2+)</name>
        <dbReference type="ChEBI" id="CHEBI:29105"/>
    </cofactor>
    <text evidence="2">There are 2 Zn(2+) ions per monomer; Zn(2+) and CoA bind inbetween the 2 domains in each monomer.</text>
</comment>
<comment type="pathway">
    <text>Polyol metabolism; 1,2-propanediol degradation.</text>
</comment>
<comment type="subunit">
    <text evidence="2">Full-length protein forms large oligomers. Homodimer, when purified in the absence of the encapsulation peptide (EP, residues 1-47). The EP may influence oligomerization.</text>
</comment>
<comment type="interaction">
    <interactant intactId="EBI-16201701">
        <id>Q21A54</id>
    </interactant>
    <interactant intactId="EBI-16201701">
        <id>Q21A54</id>
        <label>pduL</label>
    </interactant>
    <organismsDiffer>false</organismsDiffer>
    <experiments>3</experiments>
</comment>
<comment type="subcellular location">
    <subcellularLocation>
        <location evidence="5">Bacterial microcompartment</location>
    </subcellularLocation>
    <text evidence="5">Probably located inside the BMC shell.</text>
</comment>
<comment type="domain">
    <text evidence="2">Formed by 2 beta-barrels, each is capped on both ends by short alpha-helices.</text>
</comment>
<comment type="similarity">
    <text evidence="5">Belongs to the PduL family.</text>
</comment>
<protein>
    <recommendedName>
        <fullName>Phosphate propanoyltransferase</fullName>
        <ecNumber evidence="2">2.3.1.222</ecNumber>
    </recommendedName>
    <alternativeName>
        <fullName>Phosphate acyltransferase PduL</fullName>
    </alternativeName>
    <alternativeName>
        <fullName evidence="3">Phosphotransacylase PduL</fullName>
        <shortName evidence="3">PTAC</shortName>
    </alternativeName>
    <alternativeName>
        <fullName evidence="4">Propanediol utilization protein PduL</fullName>
    </alternativeName>
</protein>
<keyword id="KW-0002">3D-structure</keyword>
<keyword id="KW-0012">Acyltransferase</keyword>
<keyword id="KW-1283">Bacterial microcompartment</keyword>
<keyword id="KW-0479">Metal-binding</keyword>
<keyword id="KW-0808">Transferase</keyword>
<keyword id="KW-0862">Zinc</keyword>
<reference key="1">
    <citation type="submission" date="2006-03" db="EMBL/GenBank/DDBJ databases">
        <title>Complete sequence of Rhodopseudomonas palustris BisB18.</title>
        <authorList>
            <consortium name="US DOE Joint Genome Institute"/>
            <person name="Copeland A."/>
            <person name="Lucas S."/>
            <person name="Lapidus A."/>
            <person name="Barry K."/>
            <person name="Detter J.C."/>
            <person name="Glavina del Rio T."/>
            <person name="Hammon N."/>
            <person name="Israni S."/>
            <person name="Dalin E."/>
            <person name="Tice H."/>
            <person name="Pitluck S."/>
            <person name="Chain P."/>
            <person name="Malfatti S."/>
            <person name="Shin M."/>
            <person name="Vergez L."/>
            <person name="Schmutz J."/>
            <person name="Larimer F."/>
            <person name="Land M."/>
            <person name="Hauser L."/>
            <person name="Pelletier D.A."/>
            <person name="Kyrpides N."/>
            <person name="Anderson I."/>
            <person name="Oda Y."/>
            <person name="Harwood C.S."/>
            <person name="Richardson P."/>
        </authorList>
    </citation>
    <scope>NUCLEOTIDE SEQUENCE [LARGE SCALE GENOMIC DNA]</scope>
    <source>
        <strain>BisB18</strain>
    </source>
</reference>
<reference evidence="6 7" key="2">
    <citation type="journal article" date="2016" name="PLoS Biol.">
        <title>The Structural Basis of Coenzyme A Recycling in a Bacterial Organelle.</title>
        <authorList>
            <person name="Erbilgin O."/>
            <person name="Sutter M."/>
            <person name="Kerfeld C.A."/>
        </authorList>
    </citation>
    <scope>X-RAY CRYSTALLOGRAPHY (1.54 ANGSTROMS) OF 34-226 IN COMPLEX WITH ZINC WITH AND WITHOUT COENZYME A OR PHOSPHATE</scope>
    <scope>FUNCTION</scope>
    <scope>CATALYTIC ACTIVITY</scope>
    <scope>SUBUNIT</scope>
    <scope>DOMAIN</scope>
    <scope>MUTAGENESIS OF 1-MET--THR-33</scope>
    <source>
        <strain>BisB18</strain>
    </source>
</reference>
<evidence type="ECO:0000250" key="1">
    <source>
        <dbReference type="UniProtKB" id="Q9XDN5"/>
    </source>
</evidence>
<evidence type="ECO:0000269" key="2">
    <source>
    </source>
</evidence>
<evidence type="ECO:0000303" key="3">
    <source>
    </source>
</evidence>
<evidence type="ECO:0000305" key="4"/>
<evidence type="ECO:0000305" key="5">
    <source>
    </source>
</evidence>
<evidence type="ECO:0007744" key="6">
    <source>
        <dbReference type="PDB" id="5CUO"/>
    </source>
</evidence>
<evidence type="ECO:0007744" key="7">
    <source>
        <dbReference type="PDB" id="5CUP"/>
    </source>
</evidence>
<gene>
    <name evidence="3" type="primary">pduL</name>
    <name type="ordered locus">RPC_1169</name>
</gene>
<sequence>MDMQQETIERIIRQVLGQVGPAGGSIATLSGDAGVDPFQVAVGVSNRHIHLSRTDMDTLFGPGAELQRKKAMKQPGQFAAEETVTLKGPKGSLSKVRVLGPLRRETQVEVSVADGFALGITPPLRQSGQLDDTPGLTIIGPQGSVTKDHGVIVAQRHIHMHPSTAAKLGLRNGDEVDVEAGGERGGVMHRVLIRVAEASADEMHIDVEEANALCLKNDDVVRICKK</sequence>
<accession>Q21A54</accession>
<feature type="chain" id="PRO_0000454245" description="Phosphate propanoyltransferase">
    <location>
        <begin position="1"/>
        <end position="226"/>
    </location>
</feature>
<feature type="binding site" evidence="2 6">
    <location>
        <begin position="44"/>
        <end position="46"/>
    </location>
    <ligand>
        <name>CoA</name>
        <dbReference type="ChEBI" id="CHEBI:57287"/>
    </ligand>
</feature>
<feature type="binding site" evidence="2 6 7">
    <location>
        <position position="48"/>
    </location>
    <ligand>
        <name>Zn(2+)</name>
        <dbReference type="ChEBI" id="CHEBI:29105"/>
        <label>1</label>
    </ligand>
</feature>
<feature type="binding site" evidence="2 6 7">
    <location>
        <position position="50"/>
    </location>
    <ligand>
        <name>Zn(2+)</name>
        <dbReference type="ChEBI" id="CHEBI:29105"/>
        <label>1</label>
    </ligand>
</feature>
<feature type="binding site" evidence="2 6">
    <location>
        <position position="72"/>
    </location>
    <ligand>
        <name>CoA</name>
        <dbReference type="ChEBI" id="CHEBI:57287"/>
    </ligand>
</feature>
<feature type="binding site" evidence="2 6">
    <location>
        <position position="90"/>
    </location>
    <ligand>
        <name>CoA</name>
        <dbReference type="ChEBI" id="CHEBI:57287"/>
    </ligand>
</feature>
<feature type="binding site" evidence="2 6">
    <location>
        <position position="97"/>
    </location>
    <ligand>
        <name>CoA</name>
        <dbReference type="ChEBI" id="CHEBI:57287"/>
    </ligand>
</feature>
<feature type="binding site" evidence="2 7">
    <location>
        <position position="103"/>
    </location>
    <ligand>
        <name>phosphate</name>
        <dbReference type="ChEBI" id="CHEBI:43474"/>
    </ligand>
</feature>
<feature type="binding site" evidence="2 6 7">
    <location>
        <position position="109"/>
    </location>
    <ligand>
        <name>Zn(2+)</name>
        <dbReference type="ChEBI" id="CHEBI:29105"/>
        <label>1</label>
    </ligand>
</feature>
<feature type="binding site" evidence="2 6">
    <location>
        <position position="116"/>
    </location>
    <ligand>
        <name>CoA</name>
        <dbReference type="ChEBI" id="CHEBI:57287"/>
    </ligand>
</feature>
<feature type="binding site" evidence="2 6 7">
    <location>
        <position position="157"/>
    </location>
    <ligand>
        <name>Zn(2+)</name>
        <dbReference type="ChEBI" id="CHEBI:29105"/>
        <label>2</label>
    </ligand>
</feature>
<feature type="binding site" evidence="2 6 7">
    <location>
        <position position="159"/>
    </location>
    <ligand>
        <name>Zn(2+)</name>
        <dbReference type="ChEBI" id="CHEBI:29105"/>
        <label>2</label>
    </ligand>
</feature>
<feature type="binding site" evidence="2 6 7">
    <location>
        <position position="204"/>
    </location>
    <ligand>
        <name>Zn(2+)</name>
        <dbReference type="ChEBI" id="CHEBI:29105"/>
        <label>2</label>
    </ligand>
</feature>
<feature type="binding site" evidence="2 6">
    <location>
        <position position="211"/>
    </location>
    <ligand>
        <name>CoA</name>
        <dbReference type="ChEBI" id="CHEBI:57287"/>
    </ligand>
</feature>
<feature type="mutagenesis site" description="Enzyme active, produces crystals." evidence="2">
    <location>
        <begin position="1"/>
        <end position="33"/>
    </location>
</feature>
<dbReference type="EC" id="2.3.1.222" evidence="2"/>
<dbReference type="EMBL" id="CP000301">
    <property type="protein sequence ID" value="ABD86732.1"/>
    <property type="molecule type" value="Genomic_DNA"/>
</dbReference>
<dbReference type="PDB" id="5CUO">
    <property type="method" value="X-ray"/>
    <property type="resolution" value="1.54 A"/>
    <property type="chains" value="A/B=34-226"/>
</dbReference>
<dbReference type="PDB" id="5CUP">
    <property type="method" value="X-ray"/>
    <property type="resolution" value="2.10 A"/>
    <property type="chains" value="A/B=34-226"/>
</dbReference>
<dbReference type="PDBsum" id="5CUO"/>
<dbReference type="PDBsum" id="5CUP"/>
<dbReference type="SMR" id="Q21A54"/>
<dbReference type="DIP" id="DIP-61925N"/>
<dbReference type="STRING" id="316056.RPC_1169"/>
<dbReference type="KEGG" id="rpc:RPC_1169"/>
<dbReference type="eggNOG" id="COG4869">
    <property type="taxonomic scope" value="Bacteria"/>
</dbReference>
<dbReference type="HOGENOM" id="CLU_080676_1_0_5"/>
<dbReference type="OrthoDB" id="9784365at2"/>
<dbReference type="BRENDA" id="2.3.1.222">
    <property type="organism ID" value="5412"/>
</dbReference>
<dbReference type="UniPathway" id="UPA00621"/>
<dbReference type="EvolutionaryTrace" id="Q21A54"/>
<dbReference type="GO" id="GO:0031469">
    <property type="term" value="C:bacterial microcompartment"/>
    <property type="evidence" value="ECO:0007669"/>
    <property type="project" value="UniProtKB-SubCell"/>
</dbReference>
<dbReference type="GO" id="GO:0016747">
    <property type="term" value="F:acyltransferase activity, transferring groups other than amino-acyl groups"/>
    <property type="evidence" value="ECO:0007669"/>
    <property type="project" value="InterPro"/>
</dbReference>
<dbReference type="GO" id="GO:0042802">
    <property type="term" value="F:identical protein binding"/>
    <property type="evidence" value="ECO:0000353"/>
    <property type="project" value="IntAct"/>
</dbReference>
<dbReference type="GO" id="GO:0046872">
    <property type="term" value="F:metal ion binding"/>
    <property type="evidence" value="ECO:0007669"/>
    <property type="project" value="UniProtKB-KW"/>
</dbReference>
<dbReference type="GO" id="GO:0051144">
    <property type="term" value="P:propanediol catabolic process"/>
    <property type="evidence" value="ECO:0007669"/>
    <property type="project" value="UniProtKB-UniPathway"/>
</dbReference>
<dbReference type="InterPro" id="IPR009010">
    <property type="entry name" value="Asp_de-COase-like_dom_sf"/>
</dbReference>
<dbReference type="InterPro" id="IPR008300">
    <property type="entry name" value="PTAC"/>
</dbReference>
<dbReference type="NCBIfam" id="NF011652">
    <property type="entry name" value="PRK15070.1"/>
    <property type="match status" value="1"/>
</dbReference>
<dbReference type="PANTHER" id="PTHR39453">
    <property type="entry name" value="PHOSPHATE PROPANOYLTRANSFERASE"/>
    <property type="match status" value="1"/>
</dbReference>
<dbReference type="PANTHER" id="PTHR39453:SF1">
    <property type="entry name" value="PHOSPHATE PROPANOYLTRANSFERASE"/>
    <property type="match status" value="1"/>
</dbReference>
<dbReference type="Pfam" id="PF06130">
    <property type="entry name" value="PTAC"/>
    <property type="match status" value="1"/>
</dbReference>
<dbReference type="PIRSF" id="PIRSF010130">
    <property type="entry name" value="PduL"/>
    <property type="match status" value="1"/>
</dbReference>
<dbReference type="SUPFAM" id="SSF50692">
    <property type="entry name" value="ADC-like"/>
    <property type="match status" value="1"/>
</dbReference>
<proteinExistence type="evidence at protein level"/>
<name>PDUL_RHOPB</name>
<organism>
    <name type="scientific">Rhodopseudomonas palustris (strain BisB18)</name>
    <dbReference type="NCBI Taxonomy" id="316056"/>
    <lineage>
        <taxon>Bacteria</taxon>
        <taxon>Pseudomonadati</taxon>
        <taxon>Pseudomonadota</taxon>
        <taxon>Alphaproteobacteria</taxon>
        <taxon>Hyphomicrobiales</taxon>
        <taxon>Nitrobacteraceae</taxon>
        <taxon>Rhodopseudomonas</taxon>
    </lineage>
</organism>